<comment type="function">
    <text evidence="1">This protein is located at the 30S-50S ribosomal subunit interface and may play a role in the structure and function of the aminoacyl-tRNA binding site.</text>
</comment>
<comment type="similarity">
    <text evidence="1">Belongs to the bacterial ribosomal protein bL19 family.</text>
</comment>
<proteinExistence type="inferred from homology"/>
<protein>
    <recommendedName>
        <fullName evidence="1">Large ribosomal subunit protein bL19</fullName>
    </recommendedName>
    <alternativeName>
        <fullName evidence="2">50S ribosomal protein L19</fullName>
    </alternativeName>
</protein>
<feature type="chain" id="PRO_1000080371" description="Large ribosomal subunit protein bL19">
    <location>
        <begin position="1"/>
        <end position="117"/>
    </location>
</feature>
<name>RL19_SHEB9</name>
<gene>
    <name evidence="1" type="primary">rplS</name>
    <name type="ordered locus">Sbal195_1290</name>
</gene>
<evidence type="ECO:0000255" key="1">
    <source>
        <dbReference type="HAMAP-Rule" id="MF_00402"/>
    </source>
</evidence>
<evidence type="ECO:0000305" key="2"/>
<sequence>MNNIIKMLNDEQMKQDVPAFGAGDTVVVQVRVKEGDKERLQAFEGVVIAKRNRGLHSAFTVRKISNGEGVERAFQTHSPLIASIEVKRRGRVRRAKLYYLRDRSGKSARIREKLATK</sequence>
<accession>A9L5P8</accession>
<dbReference type="EMBL" id="CP000891">
    <property type="protein sequence ID" value="ABX48465.1"/>
    <property type="molecule type" value="Genomic_DNA"/>
</dbReference>
<dbReference type="RefSeq" id="WP_006080791.1">
    <property type="nucleotide sequence ID" value="NC_009997.1"/>
</dbReference>
<dbReference type="SMR" id="A9L5P8"/>
<dbReference type="GeneID" id="94728937"/>
<dbReference type="KEGG" id="sbn:Sbal195_1290"/>
<dbReference type="HOGENOM" id="CLU_103507_2_2_6"/>
<dbReference type="Proteomes" id="UP000000770">
    <property type="component" value="Chromosome"/>
</dbReference>
<dbReference type="GO" id="GO:0022625">
    <property type="term" value="C:cytosolic large ribosomal subunit"/>
    <property type="evidence" value="ECO:0007669"/>
    <property type="project" value="TreeGrafter"/>
</dbReference>
<dbReference type="GO" id="GO:0003735">
    <property type="term" value="F:structural constituent of ribosome"/>
    <property type="evidence" value="ECO:0007669"/>
    <property type="project" value="InterPro"/>
</dbReference>
<dbReference type="GO" id="GO:0006412">
    <property type="term" value="P:translation"/>
    <property type="evidence" value="ECO:0007669"/>
    <property type="project" value="UniProtKB-UniRule"/>
</dbReference>
<dbReference type="FunFam" id="2.30.30.790:FF:000001">
    <property type="entry name" value="50S ribosomal protein L19"/>
    <property type="match status" value="1"/>
</dbReference>
<dbReference type="Gene3D" id="2.30.30.790">
    <property type="match status" value="1"/>
</dbReference>
<dbReference type="HAMAP" id="MF_00402">
    <property type="entry name" value="Ribosomal_bL19"/>
    <property type="match status" value="1"/>
</dbReference>
<dbReference type="InterPro" id="IPR001857">
    <property type="entry name" value="Ribosomal_bL19"/>
</dbReference>
<dbReference type="InterPro" id="IPR018257">
    <property type="entry name" value="Ribosomal_bL19_CS"/>
</dbReference>
<dbReference type="InterPro" id="IPR038657">
    <property type="entry name" value="Ribosomal_bL19_sf"/>
</dbReference>
<dbReference type="InterPro" id="IPR008991">
    <property type="entry name" value="Translation_prot_SH3-like_sf"/>
</dbReference>
<dbReference type="NCBIfam" id="TIGR01024">
    <property type="entry name" value="rplS_bact"/>
    <property type="match status" value="1"/>
</dbReference>
<dbReference type="PANTHER" id="PTHR15680:SF9">
    <property type="entry name" value="LARGE RIBOSOMAL SUBUNIT PROTEIN BL19M"/>
    <property type="match status" value="1"/>
</dbReference>
<dbReference type="PANTHER" id="PTHR15680">
    <property type="entry name" value="RIBOSOMAL PROTEIN L19"/>
    <property type="match status" value="1"/>
</dbReference>
<dbReference type="Pfam" id="PF01245">
    <property type="entry name" value="Ribosomal_L19"/>
    <property type="match status" value="1"/>
</dbReference>
<dbReference type="PIRSF" id="PIRSF002191">
    <property type="entry name" value="Ribosomal_L19"/>
    <property type="match status" value="1"/>
</dbReference>
<dbReference type="PRINTS" id="PR00061">
    <property type="entry name" value="RIBOSOMALL19"/>
</dbReference>
<dbReference type="SUPFAM" id="SSF50104">
    <property type="entry name" value="Translation proteins SH3-like domain"/>
    <property type="match status" value="1"/>
</dbReference>
<dbReference type="PROSITE" id="PS01015">
    <property type="entry name" value="RIBOSOMAL_L19"/>
    <property type="match status" value="1"/>
</dbReference>
<keyword id="KW-0687">Ribonucleoprotein</keyword>
<keyword id="KW-0689">Ribosomal protein</keyword>
<reference key="1">
    <citation type="submission" date="2007-11" db="EMBL/GenBank/DDBJ databases">
        <title>Complete sequence of chromosome of Shewanella baltica OS195.</title>
        <authorList>
            <consortium name="US DOE Joint Genome Institute"/>
            <person name="Copeland A."/>
            <person name="Lucas S."/>
            <person name="Lapidus A."/>
            <person name="Barry K."/>
            <person name="Glavina del Rio T."/>
            <person name="Dalin E."/>
            <person name="Tice H."/>
            <person name="Pitluck S."/>
            <person name="Chain P."/>
            <person name="Malfatti S."/>
            <person name="Shin M."/>
            <person name="Vergez L."/>
            <person name="Schmutz J."/>
            <person name="Larimer F."/>
            <person name="Land M."/>
            <person name="Hauser L."/>
            <person name="Kyrpides N."/>
            <person name="Kim E."/>
            <person name="Brettar I."/>
            <person name="Rodrigues J."/>
            <person name="Konstantinidis K."/>
            <person name="Klappenbach J."/>
            <person name="Hofle M."/>
            <person name="Tiedje J."/>
            <person name="Richardson P."/>
        </authorList>
    </citation>
    <scope>NUCLEOTIDE SEQUENCE [LARGE SCALE GENOMIC DNA]</scope>
    <source>
        <strain>OS195</strain>
    </source>
</reference>
<organism>
    <name type="scientific">Shewanella baltica (strain OS195)</name>
    <dbReference type="NCBI Taxonomy" id="399599"/>
    <lineage>
        <taxon>Bacteria</taxon>
        <taxon>Pseudomonadati</taxon>
        <taxon>Pseudomonadota</taxon>
        <taxon>Gammaproteobacteria</taxon>
        <taxon>Alteromonadales</taxon>
        <taxon>Shewanellaceae</taxon>
        <taxon>Shewanella</taxon>
    </lineage>
</organism>